<organism>
    <name type="scientific">Hordeum vulgare</name>
    <name type="common">Barley</name>
    <dbReference type="NCBI Taxonomy" id="4513"/>
    <lineage>
        <taxon>Eukaryota</taxon>
        <taxon>Viridiplantae</taxon>
        <taxon>Streptophyta</taxon>
        <taxon>Embryophyta</taxon>
        <taxon>Tracheophyta</taxon>
        <taxon>Spermatophyta</taxon>
        <taxon>Magnoliopsida</taxon>
        <taxon>Liliopsida</taxon>
        <taxon>Poales</taxon>
        <taxon>Poaceae</taxon>
        <taxon>BOP clade</taxon>
        <taxon>Pooideae</taxon>
        <taxon>Triticodae</taxon>
        <taxon>Triticeae</taxon>
        <taxon>Hordeinae</taxon>
        <taxon>Hordeum</taxon>
    </lineage>
</organism>
<keyword id="KW-0002">3D-structure</keyword>
<keyword id="KW-0052">Apoplast</keyword>
<keyword id="KW-0134">Cell wall</keyword>
<keyword id="KW-0961">Cell wall biogenesis/degradation</keyword>
<keyword id="KW-0903">Direct protein sequencing</keyword>
<keyword id="KW-1015">Disulfide bond</keyword>
<keyword id="KW-0325">Glycoprotein</keyword>
<keyword id="KW-0464">Manganese</keyword>
<keyword id="KW-0479">Metal-binding</keyword>
<keyword id="KW-0560">Oxidoreductase</keyword>
<keyword id="KW-0964">Secreted</keyword>
<keyword id="KW-0346">Stress response</keyword>
<proteinExistence type="evidence at protein level"/>
<feature type="chain" id="PRO_0000192013" description="Oxalate oxidase 1">
    <location>
        <begin position="1"/>
        <end position="201"/>
    </location>
</feature>
<feature type="domain" description="Cupin type-1" evidence="2">
    <location>
        <begin position="40"/>
        <end position="191"/>
    </location>
</feature>
<feature type="binding site" evidence="10 12">
    <location>
        <position position="75"/>
    </location>
    <ligand>
        <name>oxalate</name>
        <dbReference type="ChEBI" id="CHEBI:30623"/>
    </ligand>
</feature>
<feature type="binding site" evidence="4 10 12">
    <location>
        <position position="85"/>
    </location>
    <ligand>
        <name>oxalate</name>
        <dbReference type="ChEBI" id="CHEBI:30623"/>
    </ligand>
</feature>
<feature type="binding site" evidence="3 4 9 10 11 12">
    <location>
        <position position="88"/>
    </location>
    <ligand>
        <name>Mn(2+)</name>
        <dbReference type="ChEBI" id="CHEBI:29035"/>
    </ligand>
</feature>
<feature type="binding site" evidence="3 4 9 10 11 12">
    <location>
        <position position="90"/>
    </location>
    <ligand>
        <name>Mn(2+)</name>
        <dbReference type="ChEBI" id="CHEBI:29035"/>
    </ligand>
</feature>
<feature type="binding site" evidence="4 10 12">
    <location>
        <position position="90"/>
    </location>
    <ligand>
        <name>oxalate</name>
        <dbReference type="ChEBI" id="CHEBI:30623"/>
    </ligand>
</feature>
<feature type="binding site" evidence="3 4 9 10 12">
    <location>
        <position position="95"/>
    </location>
    <ligand>
        <name>Mn(2+)</name>
        <dbReference type="ChEBI" id="CHEBI:29035"/>
    </ligand>
</feature>
<feature type="binding site" evidence="4 12">
    <location>
        <position position="95"/>
    </location>
    <ligand>
        <name>oxalate</name>
        <dbReference type="ChEBI" id="CHEBI:30623"/>
    </ligand>
</feature>
<feature type="binding site" evidence="3 4 9 10 11 12">
    <location>
        <position position="137"/>
    </location>
    <ligand>
        <name>Mn(2+)</name>
        <dbReference type="ChEBI" id="CHEBI:29035"/>
    </ligand>
</feature>
<feature type="glycosylation site" description="N-linked (GlcNAc...) asparagine" evidence="4 12">
    <location>
        <position position="47"/>
    </location>
</feature>
<feature type="disulfide bond" evidence="3 4 9 10 11 12">
    <location>
        <begin position="10"/>
        <end position="26"/>
    </location>
</feature>
<feature type="mutagenesis site" description="Impaired oxalate oxidase activity." evidence="4">
    <original>N</original>
    <variation>A</variation>
    <location>
        <position position="75"/>
    </location>
</feature>
<feature type="mutagenesis site" description="Impaired oxalate oxidase activity." evidence="4">
    <original>N</original>
    <variation>A</variation>
    <location>
        <position position="85"/>
    </location>
</feature>
<feature type="strand" evidence="13">
    <location>
        <begin position="6"/>
        <end position="8"/>
    </location>
</feature>
<feature type="helix" evidence="13">
    <location>
        <begin position="29"/>
        <end position="31"/>
    </location>
</feature>
<feature type="strand" evidence="13">
    <location>
        <begin position="53"/>
        <end position="60"/>
    </location>
</feature>
<feature type="turn" evidence="13">
    <location>
        <begin position="61"/>
        <end position="63"/>
    </location>
</feature>
<feature type="helix" evidence="13">
    <location>
        <begin position="65"/>
        <end position="67"/>
    </location>
</feature>
<feature type="strand" evidence="13">
    <location>
        <begin position="73"/>
        <end position="79"/>
    </location>
</feature>
<feature type="strand" evidence="13">
    <location>
        <begin position="84"/>
        <end position="89"/>
    </location>
</feature>
<feature type="strand" evidence="13">
    <location>
        <begin position="95"/>
        <end position="109"/>
    </location>
</feature>
<feature type="helix" evidence="13">
    <location>
        <begin position="112"/>
        <end position="114"/>
    </location>
</feature>
<feature type="strand" evidence="13">
    <location>
        <begin position="118"/>
        <end position="124"/>
    </location>
</feature>
<feature type="strand" evidence="13">
    <location>
        <begin position="128"/>
        <end position="131"/>
    </location>
</feature>
<feature type="strand" evidence="13">
    <location>
        <begin position="137"/>
        <end position="141"/>
    </location>
</feature>
<feature type="strand" evidence="13">
    <location>
        <begin position="143"/>
        <end position="145"/>
    </location>
</feature>
<feature type="strand" evidence="13">
    <location>
        <begin position="147"/>
        <end position="156"/>
    </location>
</feature>
<feature type="helix" evidence="13">
    <location>
        <begin position="163"/>
        <end position="169"/>
    </location>
</feature>
<feature type="helix" evidence="13">
    <location>
        <begin position="176"/>
        <end position="183"/>
    </location>
</feature>
<feature type="helix" evidence="13">
    <location>
        <begin position="187"/>
        <end position="196"/>
    </location>
</feature>
<name>OXO1_HORVU</name>
<protein>
    <recommendedName>
        <fullName evidence="6 7">Oxalate oxidase 1</fullName>
        <ecNumber evidence="3 4">1.2.3.4</ecNumber>
    </recommendedName>
    <alternativeName>
        <fullName evidence="6 7">Germin</fullName>
    </alternativeName>
</protein>
<sequence length="201" mass="21203">SDPDPLQDFCVADLDGKAVSVNGHTCKPMSEAGDDFLFSSKLTKAGNTSTPNGSAVTELDVAEWPGTNTLGVSMNRVDFAPGGTNPPHIHPRATEIGMVMKGELLVGILGSLDSGNKLYSRVVRAGETFVIPRGLMHFQFNVGKTEAYMVVSFNSQNPGIVFVPLTLFGSDPPIPTPVLTKALRVEAGVVELLKSKFAGGS</sequence>
<reference key="1">
    <citation type="journal article" date="1993" name="J. Biol. Chem.">
        <title>Germin, a protein marker of early plant development, is an oxalate oxidase.</title>
        <authorList>
            <person name="Lane B.G."/>
            <person name="Dunwell J.M."/>
            <person name="Ray J.A."/>
            <person name="Schmitt M.R."/>
            <person name="Cuming A.C."/>
        </authorList>
    </citation>
    <scope>NUCLEOTIDE SEQUENCE [MRNA]</scope>
    <scope>PROTEIN SEQUENCE OF 1-18</scope>
    <scope>GLYCOSYLATION</scope>
    <scope>INDUCTION BY SALT</scope>
    <scope>SUBCELLULAR LOCATION</scope>
    <source>
        <tissue>Seedling root</tissue>
    </source>
</reference>
<reference key="2">
    <citation type="journal article" date="2000" name="Nat. Struct. Biol.">
        <title>Germin is a manganese containing homohexamer with oxalate oxidase and superoxide dismutase activities.</title>
        <authorList>
            <person name="Woo E.-J."/>
            <person name="Dunwell J.M."/>
            <person name="Goodenough P.W."/>
            <person name="Marvier A.C."/>
            <person name="Pickersgill R.W."/>
        </authorList>
    </citation>
    <scope>X-RAY CRYSTALLOGRAPHY (1.60 ANGSTROMS) IN COMPLEX WITH MANGANESE</scope>
    <scope>SUBUNIT</scope>
    <scope>FUNCTION</scope>
    <scope>CATALYTIC ACTIVITY</scope>
</reference>
<reference key="3">
    <citation type="journal article" date="2006" name="J. Biol. Chem.">
        <title>Structural and spectroscopic studies shed light on the mechanism of oxalate oxidase.</title>
        <authorList>
            <person name="Opaleye O."/>
            <person name="Rose R.-S."/>
            <person name="Whittaker M.M."/>
            <person name="Woo E.-J."/>
            <person name="Whittaker J.W."/>
            <person name="Pickersgill R.W."/>
        </authorList>
    </citation>
    <scope>X-RAY CRYSTALLOGRAPHY (1.60 ANGSTROMS) IN COMPLEX WITH MANGANESE AND GLYOXYLIC ACID</scope>
    <scope>GLYCOSYLATION AT ASN-47</scope>
    <scope>DISULFIDE BONDS</scope>
    <scope>FUNCTION</scope>
    <scope>CATALYTIC ACTIVITY</scope>
    <scope>MUTAGENESIS OF ASN-75 AND ASN-85</scope>
</reference>
<evidence type="ECO:0000250" key="1"/>
<evidence type="ECO:0000255" key="2"/>
<evidence type="ECO:0000269" key="3">
    <source>
    </source>
</evidence>
<evidence type="ECO:0000269" key="4">
    <source>
    </source>
</evidence>
<evidence type="ECO:0000269" key="5">
    <source>
    </source>
</evidence>
<evidence type="ECO:0000303" key="6">
    <source>
    </source>
</evidence>
<evidence type="ECO:0000303" key="7">
    <source>
    </source>
</evidence>
<evidence type="ECO:0000305" key="8"/>
<evidence type="ECO:0007744" key="9">
    <source>
        <dbReference type="PDB" id="1FI2"/>
    </source>
</evidence>
<evidence type="ECO:0007744" key="10">
    <source>
        <dbReference type="PDB" id="2ET1"/>
    </source>
</evidence>
<evidence type="ECO:0007744" key="11">
    <source>
        <dbReference type="PDB" id="2ET7"/>
    </source>
</evidence>
<evidence type="ECO:0007744" key="12">
    <source>
        <dbReference type="PDB" id="2ETE"/>
    </source>
</evidence>
<evidence type="ECO:0007829" key="13">
    <source>
        <dbReference type="PDB" id="1FI2"/>
    </source>
</evidence>
<comment type="function">
    <text evidence="3 4">Releases hydrogen peroxide in the apoplast which may be important for cross-linking reactions in the cell wall biochemistry. May play an important role in several aspects of plant growth and defense mechanisms.</text>
</comment>
<comment type="catalytic activity">
    <reaction evidence="3 4">
        <text>oxalate + O2 + 2 H(+) = H2O2 + 2 CO2</text>
        <dbReference type="Rhea" id="RHEA:21880"/>
        <dbReference type="ChEBI" id="CHEBI:15378"/>
        <dbReference type="ChEBI" id="CHEBI:15379"/>
        <dbReference type="ChEBI" id="CHEBI:16240"/>
        <dbReference type="ChEBI" id="CHEBI:16526"/>
        <dbReference type="ChEBI" id="CHEBI:30623"/>
        <dbReference type="EC" id="1.2.3.4"/>
    </reaction>
</comment>
<comment type="subunit">
    <text evidence="3">Homo hexamer; a trimer of dimers.</text>
</comment>
<comment type="subcellular location">
    <subcellularLocation>
        <location evidence="1 7">Secreted</location>
        <location evidence="1 7">Extracellular space</location>
        <location evidence="1 7">Apoplast</location>
    </subcellularLocation>
    <subcellularLocation>
        <location evidence="1 7">Secreted</location>
        <location evidence="1 7">Cell wall</location>
    </subcellularLocation>
</comment>
<comment type="induction">
    <text evidence="7">By salt stress.</text>
</comment>
<comment type="PTM">
    <text evidence="4 5">Glycosylated. A form called G contains antennary GlcNAc residues, whereas a form called G' lacks antennary GlcNAc residues in its otherwise identical glycans.</text>
</comment>
<comment type="similarity">
    <text evidence="8">Belongs to the germin family.</text>
</comment>
<dbReference type="EC" id="1.2.3.4" evidence="3 4"/>
<dbReference type="EMBL" id="L15737">
    <property type="protein sequence ID" value="AAA32959.1"/>
    <property type="molecule type" value="mRNA"/>
</dbReference>
<dbReference type="PIR" id="A45980">
    <property type="entry name" value="A45980"/>
</dbReference>
<dbReference type="PDB" id="1FI2">
    <property type="method" value="X-ray"/>
    <property type="resolution" value="1.60 A"/>
    <property type="chains" value="A=1-201"/>
</dbReference>
<dbReference type="PDB" id="2ET1">
    <property type="method" value="X-ray"/>
    <property type="resolution" value="1.60 A"/>
    <property type="chains" value="A=1-201"/>
</dbReference>
<dbReference type="PDB" id="2ET7">
    <property type="method" value="X-ray"/>
    <property type="resolution" value="1.70 A"/>
    <property type="chains" value="A=1-201"/>
</dbReference>
<dbReference type="PDB" id="2ETE">
    <property type="method" value="X-ray"/>
    <property type="resolution" value="1.75 A"/>
    <property type="chains" value="A/B=1-201"/>
</dbReference>
<dbReference type="PDBsum" id="1FI2"/>
<dbReference type="PDBsum" id="2ET1"/>
<dbReference type="PDBsum" id="2ET7"/>
<dbReference type="PDBsum" id="2ETE"/>
<dbReference type="SMR" id="P45850"/>
<dbReference type="MoonProt" id="P45850"/>
<dbReference type="iPTMnet" id="P45850"/>
<dbReference type="BioCyc" id="MetaCyc:MONOMER-16186"/>
<dbReference type="BRENDA" id="1.2.3.4">
    <property type="organism ID" value="2687"/>
</dbReference>
<dbReference type="SABIO-RK" id="P45850"/>
<dbReference type="EvolutionaryTrace" id="P45850"/>
<dbReference type="ExpressionAtlas" id="P45850">
    <property type="expression patterns" value="baseline and differential"/>
</dbReference>
<dbReference type="GO" id="GO:0048046">
    <property type="term" value="C:apoplast"/>
    <property type="evidence" value="ECO:0007669"/>
    <property type="project" value="UniProtKB-SubCell"/>
</dbReference>
<dbReference type="GO" id="GO:1902693">
    <property type="term" value="C:superoxide dismutase complex"/>
    <property type="evidence" value="ECO:0000314"/>
    <property type="project" value="CAFA"/>
</dbReference>
<dbReference type="GO" id="GO:0042802">
    <property type="term" value="F:identical protein binding"/>
    <property type="evidence" value="ECO:0000314"/>
    <property type="project" value="CAFA"/>
</dbReference>
<dbReference type="GO" id="GO:0030145">
    <property type="term" value="F:manganese ion binding"/>
    <property type="evidence" value="ECO:0000314"/>
    <property type="project" value="CAFA"/>
</dbReference>
<dbReference type="GO" id="GO:0050162">
    <property type="term" value="F:oxalate oxidase activity"/>
    <property type="evidence" value="ECO:0000314"/>
    <property type="project" value="CAFA"/>
</dbReference>
<dbReference type="GO" id="GO:0004784">
    <property type="term" value="F:superoxide dismutase activity"/>
    <property type="evidence" value="ECO:0000314"/>
    <property type="project" value="CAFA"/>
</dbReference>
<dbReference type="GO" id="GO:0071555">
    <property type="term" value="P:cell wall organization"/>
    <property type="evidence" value="ECO:0007669"/>
    <property type="project" value="UniProtKB-KW"/>
</dbReference>
<dbReference type="GO" id="GO:0019430">
    <property type="term" value="P:removal of superoxide radicals"/>
    <property type="evidence" value="ECO:0000314"/>
    <property type="project" value="CAFA"/>
</dbReference>
<dbReference type="CDD" id="cd02241">
    <property type="entry name" value="cupin_OxOx"/>
    <property type="match status" value="1"/>
</dbReference>
<dbReference type="FunFam" id="2.60.120.10:FF:000005">
    <property type="entry name" value="Germin-like protein subfamily 1 member 8"/>
    <property type="match status" value="1"/>
</dbReference>
<dbReference type="Gene3D" id="2.60.120.10">
    <property type="entry name" value="Jelly Rolls"/>
    <property type="match status" value="1"/>
</dbReference>
<dbReference type="InterPro" id="IPR006045">
    <property type="entry name" value="Cupin_1"/>
</dbReference>
<dbReference type="InterPro" id="IPR001929">
    <property type="entry name" value="Germin"/>
</dbReference>
<dbReference type="InterPro" id="IPR019780">
    <property type="entry name" value="Germin_Mn-BS"/>
</dbReference>
<dbReference type="InterPro" id="IPR014710">
    <property type="entry name" value="RmlC-like_jellyroll"/>
</dbReference>
<dbReference type="InterPro" id="IPR011051">
    <property type="entry name" value="RmlC_Cupin_sf"/>
</dbReference>
<dbReference type="PANTHER" id="PTHR31238">
    <property type="entry name" value="GERMIN-LIKE PROTEIN SUBFAMILY 3 MEMBER 3"/>
    <property type="match status" value="1"/>
</dbReference>
<dbReference type="Pfam" id="PF00190">
    <property type="entry name" value="Cupin_1"/>
    <property type="match status" value="1"/>
</dbReference>
<dbReference type="PRINTS" id="PR00325">
    <property type="entry name" value="GERMIN"/>
</dbReference>
<dbReference type="SMART" id="SM00835">
    <property type="entry name" value="Cupin_1"/>
    <property type="match status" value="1"/>
</dbReference>
<dbReference type="SUPFAM" id="SSF51182">
    <property type="entry name" value="RmlC-like cupins"/>
    <property type="match status" value="1"/>
</dbReference>
<dbReference type="PROSITE" id="PS00725">
    <property type="entry name" value="GERMIN"/>
    <property type="match status" value="1"/>
</dbReference>
<accession>P45850</accession>